<gene>
    <name evidence="1" type="primary">nuoK</name>
    <name type="ordered locus">Pput_1737</name>
</gene>
<reference key="1">
    <citation type="submission" date="2007-05" db="EMBL/GenBank/DDBJ databases">
        <title>Complete sequence of Pseudomonas putida F1.</title>
        <authorList>
            <consortium name="US DOE Joint Genome Institute"/>
            <person name="Copeland A."/>
            <person name="Lucas S."/>
            <person name="Lapidus A."/>
            <person name="Barry K."/>
            <person name="Detter J.C."/>
            <person name="Glavina del Rio T."/>
            <person name="Hammon N."/>
            <person name="Israni S."/>
            <person name="Dalin E."/>
            <person name="Tice H."/>
            <person name="Pitluck S."/>
            <person name="Chain P."/>
            <person name="Malfatti S."/>
            <person name="Shin M."/>
            <person name="Vergez L."/>
            <person name="Schmutz J."/>
            <person name="Larimer F."/>
            <person name="Land M."/>
            <person name="Hauser L."/>
            <person name="Kyrpides N."/>
            <person name="Lykidis A."/>
            <person name="Parales R."/>
            <person name="Richardson P."/>
        </authorList>
    </citation>
    <scope>NUCLEOTIDE SEQUENCE [LARGE SCALE GENOMIC DNA]</scope>
    <source>
        <strain>ATCC 700007 / DSM 6899 / JCM 31910 / BCRC 17059 / LMG 24140 / F1</strain>
    </source>
</reference>
<feature type="chain" id="PRO_0000390171" description="NADH-quinone oxidoreductase subunit K">
    <location>
        <begin position="1"/>
        <end position="102"/>
    </location>
</feature>
<feature type="transmembrane region" description="Helical" evidence="1">
    <location>
        <begin position="6"/>
        <end position="26"/>
    </location>
</feature>
<feature type="transmembrane region" description="Helical" evidence="1">
    <location>
        <begin position="30"/>
        <end position="50"/>
    </location>
</feature>
<feature type="transmembrane region" description="Helical" evidence="1">
    <location>
        <begin position="62"/>
        <end position="82"/>
    </location>
</feature>
<organism>
    <name type="scientific">Pseudomonas putida (strain ATCC 700007 / DSM 6899 / JCM 31910 / BCRC 17059 / LMG 24140 / F1)</name>
    <dbReference type="NCBI Taxonomy" id="351746"/>
    <lineage>
        <taxon>Bacteria</taxon>
        <taxon>Pseudomonadati</taxon>
        <taxon>Pseudomonadota</taxon>
        <taxon>Gammaproteobacteria</taxon>
        <taxon>Pseudomonadales</taxon>
        <taxon>Pseudomonadaceae</taxon>
        <taxon>Pseudomonas</taxon>
    </lineage>
</organism>
<evidence type="ECO:0000255" key="1">
    <source>
        <dbReference type="HAMAP-Rule" id="MF_01456"/>
    </source>
</evidence>
<sequence length="102" mass="10941">MGAIPLEHGLAVAGILFCLGLVGLMVRRNILFVLMSLEVMMNASALAFVVAGARWVQPDGQVMFILVISLAAAEASIGLAILLQLYRRFHTLDIDAASEMRG</sequence>
<proteinExistence type="inferred from homology"/>
<name>NUOK_PSEP1</name>
<comment type="function">
    <text evidence="1">NDH-1 shuttles electrons from NADH, via FMN and iron-sulfur (Fe-S) centers, to quinones in the respiratory chain. The immediate electron acceptor for the enzyme in this species is believed to be ubiquinone. Couples the redox reaction to proton translocation (for every two electrons transferred, four hydrogen ions are translocated across the cytoplasmic membrane), and thus conserves the redox energy in a proton gradient.</text>
</comment>
<comment type="catalytic activity">
    <reaction evidence="1">
        <text>a quinone + NADH + 5 H(+)(in) = a quinol + NAD(+) + 4 H(+)(out)</text>
        <dbReference type="Rhea" id="RHEA:57888"/>
        <dbReference type="ChEBI" id="CHEBI:15378"/>
        <dbReference type="ChEBI" id="CHEBI:24646"/>
        <dbReference type="ChEBI" id="CHEBI:57540"/>
        <dbReference type="ChEBI" id="CHEBI:57945"/>
        <dbReference type="ChEBI" id="CHEBI:132124"/>
    </reaction>
</comment>
<comment type="subunit">
    <text evidence="1">NDH-1 is composed of 13 different subunits. Subunits NuoA, H, J, K, L, M, N constitute the membrane sector of the complex.</text>
</comment>
<comment type="subcellular location">
    <subcellularLocation>
        <location evidence="1">Cell inner membrane</location>
        <topology evidence="1">Multi-pass membrane protein</topology>
    </subcellularLocation>
</comment>
<comment type="similarity">
    <text evidence="1">Belongs to the complex I subunit 4L family.</text>
</comment>
<protein>
    <recommendedName>
        <fullName evidence="1">NADH-quinone oxidoreductase subunit K</fullName>
        <ecNumber evidence="1">7.1.1.-</ecNumber>
    </recommendedName>
    <alternativeName>
        <fullName evidence="1">NADH dehydrogenase I subunit K</fullName>
    </alternativeName>
    <alternativeName>
        <fullName evidence="1">NDH-1 subunit K</fullName>
    </alternativeName>
</protein>
<keyword id="KW-0997">Cell inner membrane</keyword>
<keyword id="KW-1003">Cell membrane</keyword>
<keyword id="KW-0472">Membrane</keyword>
<keyword id="KW-0520">NAD</keyword>
<keyword id="KW-0874">Quinone</keyword>
<keyword id="KW-1278">Translocase</keyword>
<keyword id="KW-0812">Transmembrane</keyword>
<keyword id="KW-1133">Transmembrane helix</keyword>
<keyword id="KW-0813">Transport</keyword>
<keyword id="KW-0830">Ubiquinone</keyword>
<dbReference type="EC" id="7.1.1.-" evidence="1"/>
<dbReference type="EMBL" id="CP000712">
    <property type="protein sequence ID" value="ABQ77893.1"/>
    <property type="molecule type" value="Genomic_DNA"/>
</dbReference>
<dbReference type="SMR" id="A5W183"/>
<dbReference type="KEGG" id="ppf:Pput_1737"/>
<dbReference type="eggNOG" id="COG0713">
    <property type="taxonomic scope" value="Bacteria"/>
</dbReference>
<dbReference type="HOGENOM" id="CLU_144724_0_1_6"/>
<dbReference type="GO" id="GO:0030964">
    <property type="term" value="C:NADH dehydrogenase complex"/>
    <property type="evidence" value="ECO:0007669"/>
    <property type="project" value="TreeGrafter"/>
</dbReference>
<dbReference type="GO" id="GO:0005886">
    <property type="term" value="C:plasma membrane"/>
    <property type="evidence" value="ECO:0007669"/>
    <property type="project" value="UniProtKB-SubCell"/>
</dbReference>
<dbReference type="GO" id="GO:0050136">
    <property type="term" value="F:NADH:ubiquinone reductase (non-electrogenic) activity"/>
    <property type="evidence" value="ECO:0007669"/>
    <property type="project" value="UniProtKB-UniRule"/>
</dbReference>
<dbReference type="GO" id="GO:0048038">
    <property type="term" value="F:quinone binding"/>
    <property type="evidence" value="ECO:0007669"/>
    <property type="project" value="UniProtKB-KW"/>
</dbReference>
<dbReference type="GO" id="GO:0042773">
    <property type="term" value="P:ATP synthesis coupled electron transport"/>
    <property type="evidence" value="ECO:0007669"/>
    <property type="project" value="InterPro"/>
</dbReference>
<dbReference type="FunFam" id="1.10.287.3510:FF:000001">
    <property type="entry name" value="NADH-quinone oxidoreductase subunit K"/>
    <property type="match status" value="1"/>
</dbReference>
<dbReference type="Gene3D" id="1.10.287.3510">
    <property type="match status" value="1"/>
</dbReference>
<dbReference type="HAMAP" id="MF_01456">
    <property type="entry name" value="NDH1_NuoK"/>
    <property type="match status" value="1"/>
</dbReference>
<dbReference type="InterPro" id="IPR001133">
    <property type="entry name" value="NADH_UbQ_OxRdtase_chain4L/K"/>
</dbReference>
<dbReference type="InterPro" id="IPR039428">
    <property type="entry name" value="NUOK/Mnh_C1-like"/>
</dbReference>
<dbReference type="NCBIfam" id="NF004319">
    <property type="entry name" value="PRK05715.1-1"/>
    <property type="match status" value="1"/>
</dbReference>
<dbReference type="NCBIfam" id="NF004320">
    <property type="entry name" value="PRK05715.1-2"/>
    <property type="match status" value="1"/>
</dbReference>
<dbReference type="PANTHER" id="PTHR11434:SF16">
    <property type="entry name" value="NADH-UBIQUINONE OXIDOREDUCTASE CHAIN 4L"/>
    <property type="match status" value="1"/>
</dbReference>
<dbReference type="PANTHER" id="PTHR11434">
    <property type="entry name" value="NADH-UBIQUINONE OXIDOREDUCTASE SUBUNIT ND4L"/>
    <property type="match status" value="1"/>
</dbReference>
<dbReference type="Pfam" id="PF00420">
    <property type="entry name" value="Oxidored_q2"/>
    <property type="match status" value="1"/>
</dbReference>
<accession>A5W183</accession>